<reference key="1">
    <citation type="submission" date="2007-07" db="EMBL/GenBank/DDBJ databases">
        <title>Complete genome sequence of Campylobacter hominis ATCC BAA-381, a commensal isolated from the human gastrointestinal tract.</title>
        <authorList>
            <person name="Fouts D.E."/>
            <person name="Mongodin E.F."/>
            <person name="Puiu D."/>
            <person name="Sebastian Y."/>
            <person name="Miller W.G."/>
            <person name="Mandrell R.E."/>
            <person name="Nelson K.E."/>
        </authorList>
    </citation>
    <scope>NUCLEOTIDE SEQUENCE [LARGE SCALE GENOMIC DNA]</scope>
    <source>
        <strain>ATCC BAA-381 / DSM 21671 / CCUG 45161 / LMG 19568 / NCTC 13146 / CH001A</strain>
    </source>
</reference>
<accession>A7I379</accession>
<feature type="chain" id="PRO_1000008408" description="Holo-[acyl-carrier-protein] synthase">
    <location>
        <begin position="1"/>
        <end position="124"/>
    </location>
</feature>
<feature type="binding site" evidence="1">
    <location>
        <position position="5"/>
    </location>
    <ligand>
        <name>Mg(2+)</name>
        <dbReference type="ChEBI" id="CHEBI:18420"/>
    </ligand>
</feature>
<feature type="binding site" evidence="1">
    <location>
        <position position="56"/>
    </location>
    <ligand>
        <name>Mg(2+)</name>
        <dbReference type="ChEBI" id="CHEBI:18420"/>
    </ligand>
</feature>
<organism>
    <name type="scientific">Campylobacter hominis (strain ATCC BAA-381 / DSM 21671 / CCUG 45161 / LMG 19568 / NCTC 13146 / CH001A)</name>
    <dbReference type="NCBI Taxonomy" id="360107"/>
    <lineage>
        <taxon>Bacteria</taxon>
        <taxon>Pseudomonadati</taxon>
        <taxon>Campylobacterota</taxon>
        <taxon>Epsilonproteobacteria</taxon>
        <taxon>Campylobacterales</taxon>
        <taxon>Campylobacteraceae</taxon>
        <taxon>Campylobacter</taxon>
    </lineage>
</organism>
<proteinExistence type="inferred from homology"/>
<dbReference type="EC" id="2.7.8.7" evidence="1"/>
<dbReference type="EMBL" id="CP000776">
    <property type="protein sequence ID" value="ABS52459.1"/>
    <property type="molecule type" value="Genomic_DNA"/>
</dbReference>
<dbReference type="RefSeq" id="WP_012109273.1">
    <property type="nucleotide sequence ID" value="NC_009714.1"/>
</dbReference>
<dbReference type="SMR" id="A7I379"/>
<dbReference type="STRING" id="360107.CHAB381_1428"/>
<dbReference type="KEGG" id="cha:CHAB381_1428"/>
<dbReference type="eggNOG" id="COG0736">
    <property type="taxonomic scope" value="Bacteria"/>
</dbReference>
<dbReference type="HOGENOM" id="CLU_089696_0_2_7"/>
<dbReference type="OrthoDB" id="517356at2"/>
<dbReference type="Proteomes" id="UP000002407">
    <property type="component" value="Chromosome"/>
</dbReference>
<dbReference type="GO" id="GO:0005737">
    <property type="term" value="C:cytoplasm"/>
    <property type="evidence" value="ECO:0007669"/>
    <property type="project" value="UniProtKB-SubCell"/>
</dbReference>
<dbReference type="GO" id="GO:0008897">
    <property type="term" value="F:holo-[acyl-carrier-protein] synthase activity"/>
    <property type="evidence" value="ECO:0007669"/>
    <property type="project" value="UniProtKB-UniRule"/>
</dbReference>
<dbReference type="GO" id="GO:0000287">
    <property type="term" value="F:magnesium ion binding"/>
    <property type="evidence" value="ECO:0007669"/>
    <property type="project" value="UniProtKB-UniRule"/>
</dbReference>
<dbReference type="GO" id="GO:0006633">
    <property type="term" value="P:fatty acid biosynthetic process"/>
    <property type="evidence" value="ECO:0007669"/>
    <property type="project" value="UniProtKB-UniRule"/>
</dbReference>
<dbReference type="Gene3D" id="3.90.470.20">
    <property type="entry name" value="4'-phosphopantetheinyl transferase domain"/>
    <property type="match status" value="1"/>
</dbReference>
<dbReference type="HAMAP" id="MF_00101">
    <property type="entry name" value="AcpS"/>
    <property type="match status" value="1"/>
</dbReference>
<dbReference type="InterPro" id="IPR008278">
    <property type="entry name" value="4-PPantetheinyl_Trfase_dom"/>
</dbReference>
<dbReference type="InterPro" id="IPR037143">
    <property type="entry name" value="4-PPantetheinyl_Trfase_dom_sf"/>
</dbReference>
<dbReference type="InterPro" id="IPR002582">
    <property type="entry name" value="ACPS"/>
</dbReference>
<dbReference type="InterPro" id="IPR004568">
    <property type="entry name" value="Ppantetheine-prot_Trfase_dom"/>
</dbReference>
<dbReference type="NCBIfam" id="TIGR00516">
    <property type="entry name" value="acpS"/>
    <property type="match status" value="1"/>
</dbReference>
<dbReference type="NCBIfam" id="TIGR00556">
    <property type="entry name" value="pantethn_trn"/>
    <property type="match status" value="1"/>
</dbReference>
<dbReference type="Pfam" id="PF01648">
    <property type="entry name" value="ACPS"/>
    <property type="match status" value="1"/>
</dbReference>
<dbReference type="SUPFAM" id="SSF56214">
    <property type="entry name" value="4'-phosphopantetheinyl transferase"/>
    <property type="match status" value="1"/>
</dbReference>
<name>ACPS_CAMHC</name>
<comment type="function">
    <text evidence="1">Transfers the 4'-phosphopantetheine moiety from coenzyme A to a Ser of acyl-carrier-protein.</text>
</comment>
<comment type="catalytic activity">
    <reaction evidence="1">
        <text>apo-[ACP] + CoA = holo-[ACP] + adenosine 3',5'-bisphosphate + H(+)</text>
        <dbReference type="Rhea" id="RHEA:12068"/>
        <dbReference type="Rhea" id="RHEA-COMP:9685"/>
        <dbReference type="Rhea" id="RHEA-COMP:9690"/>
        <dbReference type="ChEBI" id="CHEBI:15378"/>
        <dbReference type="ChEBI" id="CHEBI:29999"/>
        <dbReference type="ChEBI" id="CHEBI:57287"/>
        <dbReference type="ChEBI" id="CHEBI:58343"/>
        <dbReference type="ChEBI" id="CHEBI:64479"/>
        <dbReference type="EC" id="2.7.8.7"/>
    </reaction>
</comment>
<comment type="cofactor">
    <cofactor evidence="1">
        <name>Mg(2+)</name>
        <dbReference type="ChEBI" id="CHEBI:18420"/>
    </cofactor>
</comment>
<comment type="subcellular location">
    <subcellularLocation>
        <location evidence="1">Cytoplasm</location>
    </subcellularLocation>
</comment>
<comment type="similarity">
    <text evidence="1">Belongs to the P-Pant transferase superfamily. AcpS family.</text>
</comment>
<gene>
    <name evidence="1" type="primary">acpS</name>
    <name type="ordered locus">CHAB381_1428</name>
</gene>
<sequence>MIGIDIVSISRISKIYTKFGDKFLDKILSGNEQNSVLNLNYNLKLERLAGIYAAKEAFAKALGVGISADFGFLDVEILKNDRGAPFLEIAPCIIKKFNIKNADVSITHDGGFAISAVILEMSKF</sequence>
<protein>
    <recommendedName>
        <fullName evidence="1">Holo-[acyl-carrier-protein] synthase</fullName>
        <shortName evidence="1">Holo-ACP synthase</shortName>
        <ecNumber evidence="1">2.7.8.7</ecNumber>
    </recommendedName>
    <alternativeName>
        <fullName evidence="1">4'-phosphopantetheinyl transferase AcpS</fullName>
    </alternativeName>
</protein>
<keyword id="KW-0963">Cytoplasm</keyword>
<keyword id="KW-0275">Fatty acid biosynthesis</keyword>
<keyword id="KW-0276">Fatty acid metabolism</keyword>
<keyword id="KW-0444">Lipid biosynthesis</keyword>
<keyword id="KW-0443">Lipid metabolism</keyword>
<keyword id="KW-0460">Magnesium</keyword>
<keyword id="KW-0479">Metal-binding</keyword>
<keyword id="KW-1185">Reference proteome</keyword>
<keyword id="KW-0808">Transferase</keyword>
<evidence type="ECO:0000255" key="1">
    <source>
        <dbReference type="HAMAP-Rule" id="MF_00101"/>
    </source>
</evidence>